<proteinExistence type="inferred from homology"/>
<organism>
    <name type="scientific">Escherichia coli O81 (strain ED1a)</name>
    <dbReference type="NCBI Taxonomy" id="585397"/>
    <lineage>
        <taxon>Bacteria</taxon>
        <taxon>Pseudomonadati</taxon>
        <taxon>Pseudomonadota</taxon>
        <taxon>Gammaproteobacteria</taxon>
        <taxon>Enterobacterales</taxon>
        <taxon>Enterobacteriaceae</taxon>
        <taxon>Escherichia</taxon>
    </lineage>
</organism>
<dbReference type="EMBL" id="CU928162">
    <property type="protein sequence ID" value="CAR07944.2"/>
    <property type="molecule type" value="Genomic_DNA"/>
</dbReference>
<dbReference type="RefSeq" id="WP_000598292.1">
    <property type="nucleotide sequence ID" value="NC_011745.1"/>
</dbReference>
<dbReference type="SMR" id="B7MV28"/>
<dbReference type="KEGG" id="ecq:ECED1_1750"/>
<dbReference type="HOGENOM" id="CLU_117653_2_1_6"/>
<dbReference type="Proteomes" id="UP000000748">
    <property type="component" value="Chromosome"/>
</dbReference>
<dbReference type="GO" id="GO:0005886">
    <property type="term" value="C:plasma membrane"/>
    <property type="evidence" value="ECO:0007669"/>
    <property type="project" value="UniProtKB-SubCell"/>
</dbReference>
<dbReference type="HAMAP" id="MF_00010">
    <property type="entry name" value="UPF0060"/>
    <property type="match status" value="1"/>
</dbReference>
<dbReference type="InterPro" id="IPR003844">
    <property type="entry name" value="UPF0060"/>
</dbReference>
<dbReference type="NCBIfam" id="NF002586">
    <property type="entry name" value="PRK02237.1"/>
    <property type="match status" value="1"/>
</dbReference>
<dbReference type="PANTHER" id="PTHR36116">
    <property type="entry name" value="UPF0060 MEMBRANE PROTEIN YNFA"/>
    <property type="match status" value="1"/>
</dbReference>
<dbReference type="PANTHER" id="PTHR36116:SF1">
    <property type="entry name" value="UPF0060 MEMBRANE PROTEIN YNFA"/>
    <property type="match status" value="1"/>
</dbReference>
<dbReference type="Pfam" id="PF02694">
    <property type="entry name" value="UPF0060"/>
    <property type="match status" value="1"/>
</dbReference>
<dbReference type="SUPFAM" id="SSF103481">
    <property type="entry name" value="Multidrug resistance efflux transporter EmrE"/>
    <property type="match status" value="1"/>
</dbReference>
<keyword id="KW-0997">Cell inner membrane</keyword>
<keyword id="KW-1003">Cell membrane</keyword>
<keyword id="KW-0472">Membrane</keyword>
<keyword id="KW-0812">Transmembrane</keyword>
<keyword id="KW-1133">Transmembrane helix</keyword>
<sequence length="108" mass="11920">MIKTTLLFFATALCEIIGCFLPWLWLKRNASIWLLLPAGISLALFVWLLTLHPAASGRVYAAYGGVYVCTALMWLRVVDGVKLTLYDWTGALIALCGMLIIVAGWGRT</sequence>
<name>YNFA_ECO81</name>
<accession>B7MV28</accession>
<reference key="1">
    <citation type="journal article" date="2009" name="PLoS Genet.">
        <title>Organised genome dynamics in the Escherichia coli species results in highly diverse adaptive paths.</title>
        <authorList>
            <person name="Touchon M."/>
            <person name="Hoede C."/>
            <person name="Tenaillon O."/>
            <person name="Barbe V."/>
            <person name="Baeriswyl S."/>
            <person name="Bidet P."/>
            <person name="Bingen E."/>
            <person name="Bonacorsi S."/>
            <person name="Bouchier C."/>
            <person name="Bouvet O."/>
            <person name="Calteau A."/>
            <person name="Chiapello H."/>
            <person name="Clermont O."/>
            <person name="Cruveiller S."/>
            <person name="Danchin A."/>
            <person name="Diard M."/>
            <person name="Dossat C."/>
            <person name="Karoui M.E."/>
            <person name="Frapy E."/>
            <person name="Garry L."/>
            <person name="Ghigo J.M."/>
            <person name="Gilles A.M."/>
            <person name="Johnson J."/>
            <person name="Le Bouguenec C."/>
            <person name="Lescat M."/>
            <person name="Mangenot S."/>
            <person name="Martinez-Jehanne V."/>
            <person name="Matic I."/>
            <person name="Nassif X."/>
            <person name="Oztas S."/>
            <person name="Petit M.A."/>
            <person name="Pichon C."/>
            <person name="Rouy Z."/>
            <person name="Ruf C.S."/>
            <person name="Schneider D."/>
            <person name="Tourret J."/>
            <person name="Vacherie B."/>
            <person name="Vallenet D."/>
            <person name="Medigue C."/>
            <person name="Rocha E.P.C."/>
            <person name="Denamur E."/>
        </authorList>
    </citation>
    <scope>NUCLEOTIDE SEQUENCE [LARGE SCALE GENOMIC DNA]</scope>
    <source>
        <strain>ED1a</strain>
    </source>
</reference>
<gene>
    <name evidence="1" type="primary">ynfA</name>
    <name type="ordered locus">ECED1_1750</name>
</gene>
<evidence type="ECO:0000255" key="1">
    <source>
        <dbReference type="HAMAP-Rule" id="MF_00010"/>
    </source>
</evidence>
<comment type="subcellular location">
    <subcellularLocation>
        <location evidence="1">Cell inner membrane</location>
        <topology evidence="1">Multi-pass membrane protein</topology>
    </subcellularLocation>
</comment>
<comment type="similarity">
    <text evidence="1">Belongs to the UPF0060 family.</text>
</comment>
<feature type="chain" id="PRO_1000197493" description="UPF0060 membrane protein YnfA">
    <location>
        <begin position="1"/>
        <end position="108"/>
    </location>
</feature>
<feature type="topological domain" description="Periplasmic" evidence="1">
    <location>
        <begin position="1"/>
        <end position="5"/>
    </location>
</feature>
<feature type="transmembrane region" description="Helical" evidence="1">
    <location>
        <begin position="6"/>
        <end position="26"/>
    </location>
</feature>
<feature type="topological domain" description="Cytoplasmic" evidence="1">
    <location>
        <begin position="27"/>
        <end position="30"/>
    </location>
</feature>
<feature type="transmembrane region" description="Helical" evidence="1">
    <location>
        <begin position="31"/>
        <end position="51"/>
    </location>
</feature>
<feature type="topological domain" description="Periplasmic" evidence="1">
    <location>
        <begin position="52"/>
        <end position="60"/>
    </location>
</feature>
<feature type="transmembrane region" description="Helical" evidence="1">
    <location>
        <begin position="61"/>
        <end position="81"/>
    </location>
</feature>
<feature type="topological domain" description="Cytoplasmic" evidence="1">
    <location>
        <begin position="82"/>
        <end position="84"/>
    </location>
</feature>
<feature type="transmembrane region" description="Helical" evidence="1">
    <location>
        <begin position="85"/>
        <end position="105"/>
    </location>
</feature>
<feature type="topological domain" description="Periplasmic" evidence="1">
    <location>
        <begin position="106"/>
        <end position="108"/>
    </location>
</feature>
<protein>
    <recommendedName>
        <fullName evidence="1">UPF0060 membrane protein YnfA</fullName>
    </recommendedName>
</protein>